<organism>
    <name type="scientific">Mus musculus</name>
    <name type="common">Mouse</name>
    <dbReference type="NCBI Taxonomy" id="10090"/>
    <lineage>
        <taxon>Eukaryota</taxon>
        <taxon>Metazoa</taxon>
        <taxon>Chordata</taxon>
        <taxon>Craniata</taxon>
        <taxon>Vertebrata</taxon>
        <taxon>Euteleostomi</taxon>
        <taxon>Mammalia</taxon>
        <taxon>Eutheria</taxon>
        <taxon>Euarchontoglires</taxon>
        <taxon>Glires</taxon>
        <taxon>Rodentia</taxon>
        <taxon>Myomorpha</taxon>
        <taxon>Muroidea</taxon>
        <taxon>Muridae</taxon>
        <taxon>Murinae</taxon>
        <taxon>Mus</taxon>
        <taxon>Mus</taxon>
    </lineage>
</organism>
<evidence type="ECO:0000250" key="1"/>
<evidence type="ECO:0000250" key="2">
    <source>
        <dbReference type="UniProtKB" id="Q8IXQ5"/>
    </source>
</evidence>
<evidence type="ECO:0000255" key="3">
    <source>
        <dbReference type="PROSITE-ProRule" id="PRU00037"/>
    </source>
</evidence>
<evidence type="ECO:0000305" key="4"/>
<keyword id="KW-0963">Cytoplasm</keyword>
<keyword id="KW-0880">Kelch repeat</keyword>
<keyword id="KW-0539">Nucleus</keyword>
<keyword id="KW-1185">Reference proteome</keyword>
<keyword id="KW-0677">Repeat</keyword>
<keyword id="KW-0833">Ubl conjugation pathway</keyword>
<comment type="function">
    <text evidence="1">Substrate-specific adapter of a BCR (BTB-CUL3-RBX1) E3 ubiquitin ligase complex. The BCR(KLHL7) complex acts by mediating ubiquitination and subsequent degradation of substrate proteins. Probably mediates 'Lys-48'-linked ubiquitination (By similarity).</text>
</comment>
<comment type="pathway">
    <text>Protein modification; protein ubiquitination.</text>
</comment>
<comment type="subunit">
    <text evidence="1">Homodimer. Component of the BCR(KLHL7) E3 ubiquitin ligase complex, at least composed of CUL3 and KLHL7 and RBX1 (By similarity).</text>
</comment>
<comment type="subcellular location">
    <subcellularLocation>
        <location evidence="2">Nucleus</location>
    </subcellularLocation>
    <subcellularLocation>
        <location evidence="2">Cytoplasm</location>
    </subcellularLocation>
    <text evidence="2">Colocalizes with CUL3 in punctate structures at the perinuclear region of the cytoplasm.</text>
</comment>
<gene>
    <name type="primary">Klhl7</name>
</gene>
<protein>
    <recommendedName>
        <fullName>Kelch-like protein 7</fullName>
    </recommendedName>
</protein>
<reference key="1">
    <citation type="journal article" date="2005" name="Science">
        <title>The transcriptional landscape of the mammalian genome.</title>
        <authorList>
            <person name="Carninci P."/>
            <person name="Kasukawa T."/>
            <person name="Katayama S."/>
            <person name="Gough J."/>
            <person name="Frith M.C."/>
            <person name="Maeda N."/>
            <person name="Oyama R."/>
            <person name="Ravasi T."/>
            <person name="Lenhard B."/>
            <person name="Wells C."/>
            <person name="Kodzius R."/>
            <person name="Shimokawa K."/>
            <person name="Bajic V.B."/>
            <person name="Brenner S.E."/>
            <person name="Batalov S."/>
            <person name="Forrest A.R."/>
            <person name="Zavolan M."/>
            <person name="Davis M.J."/>
            <person name="Wilming L.G."/>
            <person name="Aidinis V."/>
            <person name="Allen J.E."/>
            <person name="Ambesi-Impiombato A."/>
            <person name="Apweiler R."/>
            <person name="Aturaliya R.N."/>
            <person name="Bailey T.L."/>
            <person name="Bansal M."/>
            <person name="Baxter L."/>
            <person name="Beisel K.W."/>
            <person name="Bersano T."/>
            <person name="Bono H."/>
            <person name="Chalk A.M."/>
            <person name="Chiu K.P."/>
            <person name="Choudhary V."/>
            <person name="Christoffels A."/>
            <person name="Clutterbuck D.R."/>
            <person name="Crowe M.L."/>
            <person name="Dalla E."/>
            <person name="Dalrymple B.P."/>
            <person name="de Bono B."/>
            <person name="Della Gatta G."/>
            <person name="di Bernardo D."/>
            <person name="Down T."/>
            <person name="Engstrom P."/>
            <person name="Fagiolini M."/>
            <person name="Faulkner G."/>
            <person name="Fletcher C.F."/>
            <person name="Fukushima T."/>
            <person name="Furuno M."/>
            <person name="Futaki S."/>
            <person name="Gariboldi M."/>
            <person name="Georgii-Hemming P."/>
            <person name="Gingeras T.R."/>
            <person name="Gojobori T."/>
            <person name="Green R.E."/>
            <person name="Gustincich S."/>
            <person name="Harbers M."/>
            <person name="Hayashi Y."/>
            <person name="Hensch T.K."/>
            <person name="Hirokawa N."/>
            <person name="Hill D."/>
            <person name="Huminiecki L."/>
            <person name="Iacono M."/>
            <person name="Ikeo K."/>
            <person name="Iwama A."/>
            <person name="Ishikawa T."/>
            <person name="Jakt M."/>
            <person name="Kanapin A."/>
            <person name="Katoh M."/>
            <person name="Kawasawa Y."/>
            <person name="Kelso J."/>
            <person name="Kitamura H."/>
            <person name="Kitano H."/>
            <person name="Kollias G."/>
            <person name="Krishnan S.P."/>
            <person name="Kruger A."/>
            <person name="Kummerfeld S.K."/>
            <person name="Kurochkin I.V."/>
            <person name="Lareau L.F."/>
            <person name="Lazarevic D."/>
            <person name="Lipovich L."/>
            <person name="Liu J."/>
            <person name="Liuni S."/>
            <person name="McWilliam S."/>
            <person name="Madan Babu M."/>
            <person name="Madera M."/>
            <person name="Marchionni L."/>
            <person name="Matsuda H."/>
            <person name="Matsuzawa S."/>
            <person name="Miki H."/>
            <person name="Mignone F."/>
            <person name="Miyake S."/>
            <person name="Morris K."/>
            <person name="Mottagui-Tabar S."/>
            <person name="Mulder N."/>
            <person name="Nakano N."/>
            <person name="Nakauchi H."/>
            <person name="Ng P."/>
            <person name="Nilsson R."/>
            <person name="Nishiguchi S."/>
            <person name="Nishikawa S."/>
            <person name="Nori F."/>
            <person name="Ohara O."/>
            <person name="Okazaki Y."/>
            <person name="Orlando V."/>
            <person name="Pang K.C."/>
            <person name="Pavan W.J."/>
            <person name="Pavesi G."/>
            <person name="Pesole G."/>
            <person name="Petrovsky N."/>
            <person name="Piazza S."/>
            <person name="Reed J."/>
            <person name="Reid J.F."/>
            <person name="Ring B.Z."/>
            <person name="Ringwald M."/>
            <person name="Rost B."/>
            <person name="Ruan Y."/>
            <person name="Salzberg S.L."/>
            <person name="Sandelin A."/>
            <person name="Schneider C."/>
            <person name="Schoenbach C."/>
            <person name="Sekiguchi K."/>
            <person name="Semple C.A."/>
            <person name="Seno S."/>
            <person name="Sessa L."/>
            <person name="Sheng Y."/>
            <person name="Shibata Y."/>
            <person name="Shimada H."/>
            <person name="Shimada K."/>
            <person name="Silva D."/>
            <person name="Sinclair B."/>
            <person name="Sperling S."/>
            <person name="Stupka E."/>
            <person name="Sugiura K."/>
            <person name="Sultana R."/>
            <person name="Takenaka Y."/>
            <person name="Taki K."/>
            <person name="Tammoja K."/>
            <person name="Tan S.L."/>
            <person name="Tang S."/>
            <person name="Taylor M.S."/>
            <person name="Tegner J."/>
            <person name="Teichmann S.A."/>
            <person name="Ueda H.R."/>
            <person name="van Nimwegen E."/>
            <person name="Verardo R."/>
            <person name="Wei C.L."/>
            <person name="Yagi K."/>
            <person name="Yamanishi H."/>
            <person name="Zabarovsky E."/>
            <person name="Zhu S."/>
            <person name="Zimmer A."/>
            <person name="Hide W."/>
            <person name="Bult C."/>
            <person name="Grimmond S.M."/>
            <person name="Teasdale R.D."/>
            <person name="Liu E.T."/>
            <person name="Brusic V."/>
            <person name="Quackenbush J."/>
            <person name="Wahlestedt C."/>
            <person name="Mattick J.S."/>
            <person name="Hume D.A."/>
            <person name="Kai C."/>
            <person name="Sasaki D."/>
            <person name="Tomaru Y."/>
            <person name="Fukuda S."/>
            <person name="Kanamori-Katayama M."/>
            <person name="Suzuki M."/>
            <person name="Aoki J."/>
            <person name="Arakawa T."/>
            <person name="Iida J."/>
            <person name="Imamura K."/>
            <person name="Itoh M."/>
            <person name="Kato T."/>
            <person name="Kawaji H."/>
            <person name="Kawagashira N."/>
            <person name="Kawashima T."/>
            <person name="Kojima M."/>
            <person name="Kondo S."/>
            <person name="Konno H."/>
            <person name="Nakano K."/>
            <person name="Ninomiya N."/>
            <person name="Nishio T."/>
            <person name="Okada M."/>
            <person name="Plessy C."/>
            <person name="Shibata K."/>
            <person name="Shiraki T."/>
            <person name="Suzuki S."/>
            <person name="Tagami M."/>
            <person name="Waki K."/>
            <person name="Watahiki A."/>
            <person name="Okamura-Oho Y."/>
            <person name="Suzuki H."/>
            <person name="Kawai J."/>
            <person name="Hayashizaki Y."/>
        </authorList>
    </citation>
    <scope>NUCLEOTIDE SEQUENCE [LARGE SCALE MRNA]</scope>
    <source>
        <strain>C57BL/6J</strain>
        <tissue>Thymus</tissue>
    </source>
</reference>
<accession>Q8BUL5</accession>
<accession>Q9CZP4</accession>
<name>KLHL7_MOUSE</name>
<feature type="chain" id="PRO_0000228989" description="Kelch-like protein 7">
    <location>
        <begin position="1"/>
        <end position="586"/>
    </location>
</feature>
<feature type="domain" description="BTB" evidence="3">
    <location>
        <begin position="44"/>
        <end position="111"/>
    </location>
</feature>
<feature type="domain" description="BACK">
    <location>
        <begin position="146"/>
        <end position="248"/>
    </location>
</feature>
<feature type="repeat" description="Kelch 1">
    <location>
        <begin position="294"/>
        <end position="336"/>
    </location>
</feature>
<feature type="repeat" description="Kelch 2">
    <location>
        <begin position="337"/>
        <end position="382"/>
    </location>
</feature>
<feature type="repeat" description="Kelch 3">
    <location>
        <begin position="383"/>
        <end position="430"/>
    </location>
</feature>
<feature type="repeat" description="Kelch 4">
    <location>
        <begin position="431"/>
        <end position="481"/>
    </location>
</feature>
<feature type="repeat" description="Kelch 5">
    <location>
        <begin position="483"/>
        <end position="528"/>
    </location>
</feature>
<feature type="repeat" description="Kelch 6">
    <location>
        <begin position="530"/>
        <end position="575"/>
    </location>
</feature>
<feature type="sequence conflict" description="In Ref. 1; BAB28163." evidence="4" ref="1">
    <original>V</original>
    <variation>D</variation>
    <location>
        <position position="529"/>
    </location>
</feature>
<dbReference type="EMBL" id="AK012326">
    <property type="protein sequence ID" value="BAB28163.1"/>
    <property type="molecule type" value="mRNA"/>
</dbReference>
<dbReference type="EMBL" id="AK083358">
    <property type="protein sequence ID" value="BAC38883.1"/>
    <property type="molecule type" value="mRNA"/>
</dbReference>
<dbReference type="CCDS" id="CCDS19114.1"/>
<dbReference type="RefSeq" id="NP_080724.2">
    <property type="nucleotide sequence ID" value="NM_026448.3"/>
</dbReference>
<dbReference type="SMR" id="Q8BUL5"/>
<dbReference type="BioGRID" id="206516">
    <property type="interactions" value="32"/>
</dbReference>
<dbReference type="FunCoup" id="Q8BUL5">
    <property type="interactions" value="1373"/>
</dbReference>
<dbReference type="IntAct" id="Q8BUL5">
    <property type="interactions" value="1"/>
</dbReference>
<dbReference type="STRING" id="10090.ENSMUSP00000030841"/>
<dbReference type="iPTMnet" id="Q8BUL5"/>
<dbReference type="PhosphoSitePlus" id="Q8BUL5"/>
<dbReference type="jPOST" id="Q8BUL5"/>
<dbReference type="PaxDb" id="10090-ENSMUSP00000030841"/>
<dbReference type="PeptideAtlas" id="Q8BUL5"/>
<dbReference type="ProteomicsDB" id="263633"/>
<dbReference type="Pumba" id="Q8BUL5"/>
<dbReference type="Antibodypedia" id="25599">
    <property type="antibodies" value="98 antibodies from 19 providers"/>
</dbReference>
<dbReference type="Ensembl" id="ENSMUST00000030841.10">
    <property type="protein sequence ID" value="ENSMUSP00000030841.6"/>
    <property type="gene ID" value="ENSMUSG00000028986.13"/>
</dbReference>
<dbReference type="GeneID" id="52323"/>
<dbReference type="KEGG" id="mmu:52323"/>
<dbReference type="UCSC" id="uc008wqy.2">
    <property type="organism name" value="mouse"/>
</dbReference>
<dbReference type="AGR" id="MGI:1196453"/>
<dbReference type="CTD" id="55975"/>
<dbReference type="MGI" id="MGI:1196453">
    <property type="gene designation" value="Klhl7"/>
</dbReference>
<dbReference type="VEuPathDB" id="HostDB:ENSMUSG00000028986"/>
<dbReference type="eggNOG" id="KOG4441">
    <property type="taxonomic scope" value="Eukaryota"/>
</dbReference>
<dbReference type="GeneTree" id="ENSGT00940000155602"/>
<dbReference type="HOGENOM" id="CLU_004253_14_2_1"/>
<dbReference type="InParanoid" id="Q8BUL5"/>
<dbReference type="OMA" id="WRAASPM"/>
<dbReference type="OrthoDB" id="19132at2759"/>
<dbReference type="PhylomeDB" id="Q8BUL5"/>
<dbReference type="TreeFam" id="TF351653"/>
<dbReference type="UniPathway" id="UPA00143"/>
<dbReference type="BioGRID-ORCS" id="52323">
    <property type="hits" value="1 hit in 80 CRISPR screens"/>
</dbReference>
<dbReference type="ChiTaRS" id="Klhl7">
    <property type="organism name" value="mouse"/>
</dbReference>
<dbReference type="PRO" id="PR:Q8BUL5"/>
<dbReference type="Proteomes" id="UP000000589">
    <property type="component" value="Chromosome 5"/>
</dbReference>
<dbReference type="RNAct" id="Q8BUL5">
    <property type="molecule type" value="protein"/>
</dbReference>
<dbReference type="Bgee" id="ENSMUSG00000028986">
    <property type="expression patterns" value="Expressed in cortical plate and 253 other cell types or tissues"/>
</dbReference>
<dbReference type="ExpressionAtlas" id="Q8BUL5">
    <property type="expression patterns" value="baseline and differential"/>
</dbReference>
<dbReference type="GO" id="GO:0031463">
    <property type="term" value="C:Cul3-RING ubiquitin ligase complex"/>
    <property type="evidence" value="ECO:0000250"/>
    <property type="project" value="UniProtKB"/>
</dbReference>
<dbReference type="GO" id="GO:0005829">
    <property type="term" value="C:cytosol"/>
    <property type="evidence" value="ECO:0007669"/>
    <property type="project" value="Ensembl"/>
</dbReference>
<dbReference type="GO" id="GO:0005730">
    <property type="term" value="C:nucleolus"/>
    <property type="evidence" value="ECO:0007669"/>
    <property type="project" value="Ensembl"/>
</dbReference>
<dbReference type="GO" id="GO:0005654">
    <property type="term" value="C:nucleoplasm"/>
    <property type="evidence" value="ECO:0007669"/>
    <property type="project" value="Ensembl"/>
</dbReference>
<dbReference type="GO" id="GO:0048471">
    <property type="term" value="C:perinuclear region of cytoplasm"/>
    <property type="evidence" value="ECO:0000250"/>
    <property type="project" value="UniProtKB"/>
</dbReference>
<dbReference type="GO" id="GO:0005886">
    <property type="term" value="C:plasma membrane"/>
    <property type="evidence" value="ECO:0007669"/>
    <property type="project" value="Ensembl"/>
</dbReference>
<dbReference type="GO" id="GO:0042803">
    <property type="term" value="F:protein homodimerization activity"/>
    <property type="evidence" value="ECO:0000250"/>
    <property type="project" value="UniProtKB"/>
</dbReference>
<dbReference type="GO" id="GO:0016567">
    <property type="term" value="P:protein ubiquitination"/>
    <property type="evidence" value="ECO:0000250"/>
    <property type="project" value="UniProtKB"/>
</dbReference>
<dbReference type="CDD" id="cd18447">
    <property type="entry name" value="BACK_KLHL7"/>
    <property type="match status" value="1"/>
</dbReference>
<dbReference type="CDD" id="cd18237">
    <property type="entry name" value="BTB_POZ_KLHL7"/>
    <property type="match status" value="1"/>
</dbReference>
<dbReference type="FunFam" id="1.25.40.420:FF:000007">
    <property type="entry name" value="Kelch-like family member 7"/>
    <property type="match status" value="1"/>
</dbReference>
<dbReference type="FunFam" id="2.120.10.80:FF:000013">
    <property type="entry name" value="Kelch-like family member 7"/>
    <property type="match status" value="1"/>
</dbReference>
<dbReference type="FunFam" id="3.30.710.10:FF:000080">
    <property type="entry name" value="kelch-like protein 7 isoform X1"/>
    <property type="match status" value="1"/>
</dbReference>
<dbReference type="Gene3D" id="1.25.40.420">
    <property type="match status" value="1"/>
</dbReference>
<dbReference type="Gene3D" id="2.120.10.80">
    <property type="entry name" value="Kelch-type beta propeller"/>
    <property type="match status" value="1"/>
</dbReference>
<dbReference type="Gene3D" id="3.30.710.10">
    <property type="entry name" value="Potassium Channel Kv1.1, Chain A"/>
    <property type="match status" value="1"/>
</dbReference>
<dbReference type="InterPro" id="IPR011705">
    <property type="entry name" value="BACK"/>
</dbReference>
<dbReference type="InterPro" id="IPR017096">
    <property type="entry name" value="BTB-kelch_protein"/>
</dbReference>
<dbReference type="InterPro" id="IPR000210">
    <property type="entry name" value="BTB/POZ_dom"/>
</dbReference>
<dbReference type="InterPro" id="IPR030599">
    <property type="entry name" value="BTB/POZ_KLHL7"/>
</dbReference>
<dbReference type="InterPro" id="IPR015915">
    <property type="entry name" value="Kelch-typ_b-propeller"/>
</dbReference>
<dbReference type="InterPro" id="IPR006652">
    <property type="entry name" value="Kelch_1"/>
</dbReference>
<dbReference type="InterPro" id="IPR047060">
    <property type="entry name" value="KLHL7_BACK"/>
</dbReference>
<dbReference type="InterPro" id="IPR011333">
    <property type="entry name" value="SKP1/BTB/POZ_sf"/>
</dbReference>
<dbReference type="PANTHER" id="PTHR24412">
    <property type="entry name" value="KELCH PROTEIN"/>
    <property type="match status" value="1"/>
</dbReference>
<dbReference type="PANTHER" id="PTHR24412:SF489">
    <property type="entry name" value="RING FINGER DOMAIN AND KELCH REPEAT-CONTAINING PROTEIN DDB_G0271372"/>
    <property type="match status" value="1"/>
</dbReference>
<dbReference type="Pfam" id="PF07707">
    <property type="entry name" value="BACK"/>
    <property type="match status" value="1"/>
</dbReference>
<dbReference type="Pfam" id="PF00651">
    <property type="entry name" value="BTB"/>
    <property type="match status" value="1"/>
</dbReference>
<dbReference type="Pfam" id="PF24681">
    <property type="entry name" value="Kelch_KLHDC2_KLHL20_DRC7"/>
    <property type="match status" value="1"/>
</dbReference>
<dbReference type="PIRSF" id="PIRSF037037">
    <property type="entry name" value="Kelch-like_protein_gigaxonin"/>
    <property type="match status" value="1"/>
</dbReference>
<dbReference type="SMART" id="SM00875">
    <property type="entry name" value="BACK"/>
    <property type="match status" value="1"/>
</dbReference>
<dbReference type="SMART" id="SM00225">
    <property type="entry name" value="BTB"/>
    <property type="match status" value="1"/>
</dbReference>
<dbReference type="SMART" id="SM00612">
    <property type="entry name" value="Kelch"/>
    <property type="match status" value="4"/>
</dbReference>
<dbReference type="SUPFAM" id="SSF117281">
    <property type="entry name" value="Kelch motif"/>
    <property type="match status" value="1"/>
</dbReference>
<dbReference type="SUPFAM" id="SSF54695">
    <property type="entry name" value="POZ domain"/>
    <property type="match status" value="1"/>
</dbReference>
<dbReference type="PROSITE" id="PS50097">
    <property type="entry name" value="BTB"/>
    <property type="match status" value="1"/>
</dbReference>
<proteinExistence type="evidence at transcript level"/>
<sequence length="586" mass="65938">MATSGVEKSSKKKTEKKLAAREEAKLLAGFMGVMNNMRKQRTLCDVILTVQERKIPAHRVVLAAASHFFNLMFTTNMLESKSFEVELKDAEPDIIEQLVEFAYTARISVNSNNVQSLLDAANQYQIEPVKKMCVDFLKEQVDASNCLGISVLAECLDCPELKATADDFIHQHFTEVYKTDEFLQLDVKRVTHLLSQDTLTVRAEDQVYDAAVRWLKYDEPNRQPFMVDILAKVRFPLISKNFLSKTVQAEPLIQDNPECLKMVISGMRYHLLSPEDREELAGGTRPRRKKHDYRIALFGGSQPQSCRYFNPKDYSWTDIRCPFEKRRDAACVFWDNVVYILGGSQLFPIKRMDCYNVVKDSWYSKLGPPTPRDSLAACAAEGKIYTSGGSEVGNSALYLFECYDTRTESWHTKPSMLTQRCSHGMVEANGLIYVCGGSLGNNVSGRVLSSCEVYDPATETWTELCSMIEPRKNHGLVFVKDKIFAVGGQNGLGGLDNVEYYDIKLNEWKMVSPMPWRGVTVKCAAVGSVIYVLAGFQGVGRLGHILEYNTETDKWIANSKVRAFPVTSCLICVVDTCGANEETLET</sequence>